<protein>
    <recommendedName>
        <fullName evidence="1">Cardiolipin synthase</fullName>
        <shortName evidence="1">CL synthase</shortName>
        <ecNumber evidence="1">2.7.8.-</ecNumber>
    </recommendedName>
</protein>
<feature type="chain" id="PRO_1000058480" description="Cardiolipin synthase">
    <location>
        <begin position="1"/>
        <end position="476"/>
    </location>
</feature>
<feature type="transmembrane region" description="Helical" evidence="1">
    <location>
        <begin position="2"/>
        <end position="22"/>
    </location>
</feature>
<feature type="transmembrane region" description="Helical" evidence="1">
    <location>
        <begin position="31"/>
        <end position="51"/>
    </location>
</feature>
<feature type="domain" description="PLD phosphodiesterase 1" evidence="1">
    <location>
        <begin position="207"/>
        <end position="234"/>
    </location>
</feature>
<feature type="domain" description="PLD phosphodiesterase 2" evidence="1">
    <location>
        <begin position="389"/>
        <end position="416"/>
    </location>
</feature>
<feature type="active site" evidence="1">
    <location>
        <position position="212"/>
    </location>
</feature>
<feature type="active site" evidence="1">
    <location>
        <position position="214"/>
    </location>
</feature>
<feature type="active site" evidence="1">
    <location>
        <position position="219"/>
    </location>
</feature>
<feature type="active site" evidence="1">
    <location>
        <position position="394"/>
    </location>
</feature>
<feature type="active site" evidence="1">
    <location>
        <position position="396"/>
    </location>
</feature>
<feature type="active site" evidence="1">
    <location>
        <position position="401"/>
    </location>
</feature>
<keyword id="KW-1003">Cell membrane</keyword>
<keyword id="KW-0444">Lipid biosynthesis</keyword>
<keyword id="KW-0443">Lipid metabolism</keyword>
<keyword id="KW-0472">Membrane</keyword>
<keyword id="KW-0594">Phospholipid biosynthesis</keyword>
<keyword id="KW-1208">Phospholipid metabolism</keyword>
<keyword id="KW-0677">Repeat</keyword>
<keyword id="KW-0808">Transferase</keyword>
<keyword id="KW-0812">Transmembrane</keyword>
<keyword id="KW-1133">Transmembrane helix</keyword>
<gene>
    <name type="primary">cls</name>
    <name type="ordered locus">CPR_1418</name>
</gene>
<accession>Q0ST20</accession>
<comment type="function">
    <text evidence="1">Catalyzes the reversible phosphatidyl group transfer from one phosphatidylglycerol molecule to another to form cardiolipin (CL) (diphosphatidylglycerol) and glycerol.</text>
</comment>
<comment type="catalytic activity">
    <reaction evidence="1">
        <text>2 a 1,2-diacyl-sn-glycero-3-phospho-(1'-sn-glycerol) = a cardiolipin + glycerol</text>
        <dbReference type="Rhea" id="RHEA:31451"/>
        <dbReference type="ChEBI" id="CHEBI:17754"/>
        <dbReference type="ChEBI" id="CHEBI:62237"/>
        <dbReference type="ChEBI" id="CHEBI:64716"/>
    </reaction>
</comment>
<comment type="subcellular location">
    <subcellularLocation>
        <location evidence="1">Cell membrane</location>
        <topology evidence="1">Multi-pass membrane protein</topology>
    </subcellularLocation>
</comment>
<comment type="similarity">
    <text evidence="1">Belongs to the phospholipase D family. Cardiolipin synthase subfamily.</text>
</comment>
<evidence type="ECO:0000255" key="1">
    <source>
        <dbReference type="HAMAP-Rule" id="MF_01916"/>
    </source>
</evidence>
<organism>
    <name type="scientific">Clostridium perfringens (strain SM101 / Type A)</name>
    <dbReference type="NCBI Taxonomy" id="289380"/>
    <lineage>
        <taxon>Bacteria</taxon>
        <taxon>Bacillati</taxon>
        <taxon>Bacillota</taxon>
        <taxon>Clostridia</taxon>
        <taxon>Eubacteriales</taxon>
        <taxon>Clostridiaceae</taxon>
        <taxon>Clostridium</taxon>
    </lineage>
</organism>
<proteinExistence type="inferred from homology"/>
<name>CLS_CLOPS</name>
<dbReference type="EC" id="2.7.8.-" evidence="1"/>
<dbReference type="EMBL" id="CP000312">
    <property type="protein sequence ID" value="ABG86629.1"/>
    <property type="molecule type" value="Genomic_DNA"/>
</dbReference>
<dbReference type="RefSeq" id="WP_011592382.1">
    <property type="nucleotide sequence ID" value="NC_008262.1"/>
</dbReference>
<dbReference type="SMR" id="Q0ST20"/>
<dbReference type="KEGG" id="cpr:CPR_1418"/>
<dbReference type="Proteomes" id="UP000001824">
    <property type="component" value="Chromosome"/>
</dbReference>
<dbReference type="GO" id="GO:0005886">
    <property type="term" value="C:plasma membrane"/>
    <property type="evidence" value="ECO:0007669"/>
    <property type="project" value="UniProtKB-SubCell"/>
</dbReference>
<dbReference type="GO" id="GO:0008808">
    <property type="term" value="F:cardiolipin synthase activity"/>
    <property type="evidence" value="ECO:0007669"/>
    <property type="project" value="InterPro"/>
</dbReference>
<dbReference type="GO" id="GO:0032049">
    <property type="term" value="P:cardiolipin biosynthetic process"/>
    <property type="evidence" value="ECO:0007669"/>
    <property type="project" value="InterPro"/>
</dbReference>
<dbReference type="CDD" id="cd09110">
    <property type="entry name" value="PLDc_CLS_1"/>
    <property type="match status" value="1"/>
</dbReference>
<dbReference type="CDD" id="cd09112">
    <property type="entry name" value="PLDc_CLS_2"/>
    <property type="match status" value="1"/>
</dbReference>
<dbReference type="Gene3D" id="3.30.870.10">
    <property type="entry name" value="Endonuclease Chain A"/>
    <property type="match status" value="2"/>
</dbReference>
<dbReference type="HAMAP" id="MF_01916">
    <property type="entry name" value="Cardiolipin_synth_Cls"/>
    <property type="match status" value="1"/>
</dbReference>
<dbReference type="InterPro" id="IPR030874">
    <property type="entry name" value="Cardiolipin_synth_Firmi"/>
</dbReference>
<dbReference type="InterPro" id="IPR022924">
    <property type="entry name" value="Cardiolipin_synthase"/>
</dbReference>
<dbReference type="InterPro" id="IPR027379">
    <property type="entry name" value="CLS_N"/>
</dbReference>
<dbReference type="InterPro" id="IPR025202">
    <property type="entry name" value="PLD-like_dom"/>
</dbReference>
<dbReference type="InterPro" id="IPR001736">
    <property type="entry name" value="PLipase_D/transphosphatidylase"/>
</dbReference>
<dbReference type="NCBIfam" id="TIGR04265">
    <property type="entry name" value="bac_cardiolipin"/>
    <property type="match status" value="1"/>
</dbReference>
<dbReference type="PANTHER" id="PTHR21248">
    <property type="entry name" value="CARDIOLIPIN SYNTHASE"/>
    <property type="match status" value="1"/>
</dbReference>
<dbReference type="PANTHER" id="PTHR21248:SF22">
    <property type="entry name" value="PHOSPHOLIPASE D"/>
    <property type="match status" value="1"/>
</dbReference>
<dbReference type="Pfam" id="PF13091">
    <property type="entry name" value="PLDc_2"/>
    <property type="match status" value="2"/>
</dbReference>
<dbReference type="Pfam" id="PF13396">
    <property type="entry name" value="PLDc_N"/>
    <property type="match status" value="1"/>
</dbReference>
<dbReference type="SMART" id="SM00155">
    <property type="entry name" value="PLDc"/>
    <property type="match status" value="2"/>
</dbReference>
<dbReference type="SUPFAM" id="SSF56024">
    <property type="entry name" value="Phospholipase D/nuclease"/>
    <property type="match status" value="2"/>
</dbReference>
<dbReference type="PROSITE" id="PS50035">
    <property type="entry name" value="PLD"/>
    <property type="match status" value="2"/>
</dbReference>
<reference key="1">
    <citation type="journal article" date="2006" name="Genome Res.">
        <title>Skewed genomic variability in strains of the toxigenic bacterial pathogen, Clostridium perfringens.</title>
        <authorList>
            <person name="Myers G.S.A."/>
            <person name="Rasko D.A."/>
            <person name="Cheung J.K."/>
            <person name="Ravel J."/>
            <person name="Seshadri R."/>
            <person name="DeBoy R.T."/>
            <person name="Ren Q."/>
            <person name="Varga J."/>
            <person name="Awad M.M."/>
            <person name="Brinkac L.M."/>
            <person name="Daugherty S.C."/>
            <person name="Haft D.H."/>
            <person name="Dodson R.J."/>
            <person name="Madupu R."/>
            <person name="Nelson W.C."/>
            <person name="Rosovitz M.J."/>
            <person name="Sullivan S.A."/>
            <person name="Khouri H."/>
            <person name="Dimitrov G.I."/>
            <person name="Watkins K.L."/>
            <person name="Mulligan S."/>
            <person name="Benton J."/>
            <person name="Radune D."/>
            <person name="Fisher D.J."/>
            <person name="Atkins H.S."/>
            <person name="Hiscox T."/>
            <person name="Jost B.H."/>
            <person name="Billington S.J."/>
            <person name="Songer J.G."/>
            <person name="McClane B.A."/>
            <person name="Titball R.W."/>
            <person name="Rood J.I."/>
            <person name="Melville S.B."/>
            <person name="Paulsen I.T."/>
        </authorList>
    </citation>
    <scope>NUCLEOTIDE SEQUENCE [LARGE SCALE GENOMIC DNA]</scope>
    <source>
        <strain>SM101 / Type A</strain>
    </source>
</reference>
<sequence length="476" mass="55123">MHLLINIIFLINIIFIISIIFIERRNPQTTWAWILILTFLPILGFIIYILFGQNITREKNFKRKILDDKTKQKYLNSFKSHYKLDNISLKYKDLIMMNFNNDNSTYTQRNDIDLYFDANSLFQEMIYEINKAEKFIHMEFYIFKSDEIGKKILQALTKKAKEGVEVKLLVDSIGNSIHKKDIDKLKAAGGDFKIFFPGFCKYINLRINYRNHRKILIIDSKVAFLGGFNIGDEYLGKDKNIGNWRDTHTKIKGLAINDLEARFLLDWSYANESDLDIDLKKYFINPHSTNLPNNIIGAQIVSSGPDHTEQQIKNGYFKIINSAKKNLFIQTPYFVPDEPMLEALRLAALSGVDVKIMLPGNPDHKFMEWIANSYFESLLNAGVKIYLYEKGFLHAKTIVADSSICSVGTANMDIRSFSLNFESNIFIYNEAISKSMEEQFFKDLKVCTKVTLESFEKRSIISRIGESIIRLVSPLM</sequence>